<feature type="chain" id="PRO_1000185353" description="Phosphoglucosamine mutase">
    <location>
        <begin position="1"/>
        <end position="461"/>
    </location>
</feature>
<feature type="active site" description="Phosphoserine intermediate" evidence="1">
    <location>
        <position position="107"/>
    </location>
</feature>
<feature type="binding site" description="via phosphate group" evidence="1">
    <location>
        <position position="107"/>
    </location>
    <ligand>
        <name>Mg(2+)</name>
        <dbReference type="ChEBI" id="CHEBI:18420"/>
    </ligand>
</feature>
<feature type="binding site" evidence="1">
    <location>
        <position position="254"/>
    </location>
    <ligand>
        <name>Mg(2+)</name>
        <dbReference type="ChEBI" id="CHEBI:18420"/>
    </ligand>
</feature>
<feature type="binding site" evidence="1">
    <location>
        <position position="256"/>
    </location>
    <ligand>
        <name>Mg(2+)</name>
        <dbReference type="ChEBI" id="CHEBI:18420"/>
    </ligand>
</feature>
<feature type="binding site" evidence="1">
    <location>
        <position position="258"/>
    </location>
    <ligand>
        <name>Mg(2+)</name>
        <dbReference type="ChEBI" id="CHEBI:18420"/>
    </ligand>
</feature>
<feature type="modified residue" description="Phosphoserine" evidence="1">
    <location>
        <position position="107"/>
    </location>
</feature>
<gene>
    <name evidence="1" type="primary">glmM</name>
    <name type="ordered locus">Blon_2031</name>
    <name type="ordered locus">BLIJ_2109</name>
</gene>
<dbReference type="EC" id="5.4.2.10" evidence="1"/>
<dbReference type="EMBL" id="CP001095">
    <property type="protein sequence ID" value="ACJ53098.1"/>
    <property type="molecule type" value="Genomic_DNA"/>
</dbReference>
<dbReference type="EMBL" id="AP010889">
    <property type="protein sequence ID" value="BAJ69686.1"/>
    <property type="molecule type" value="Genomic_DNA"/>
</dbReference>
<dbReference type="RefSeq" id="WP_012578303.1">
    <property type="nucleotide sequence ID" value="NC_011593.1"/>
</dbReference>
<dbReference type="SMR" id="B7GUF2"/>
<dbReference type="KEGG" id="bln:Blon_2031"/>
<dbReference type="KEGG" id="blon:BLIJ_2109"/>
<dbReference type="PATRIC" id="fig|391904.8.peg.2115"/>
<dbReference type="HOGENOM" id="CLU_016950_7_0_11"/>
<dbReference type="Proteomes" id="UP000001360">
    <property type="component" value="Chromosome"/>
</dbReference>
<dbReference type="GO" id="GO:0005829">
    <property type="term" value="C:cytosol"/>
    <property type="evidence" value="ECO:0007669"/>
    <property type="project" value="TreeGrafter"/>
</dbReference>
<dbReference type="GO" id="GO:0000287">
    <property type="term" value="F:magnesium ion binding"/>
    <property type="evidence" value="ECO:0007669"/>
    <property type="project" value="UniProtKB-UniRule"/>
</dbReference>
<dbReference type="GO" id="GO:0008966">
    <property type="term" value="F:phosphoglucosamine mutase activity"/>
    <property type="evidence" value="ECO:0007669"/>
    <property type="project" value="UniProtKB-UniRule"/>
</dbReference>
<dbReference type="GO" id="GO:0004615">
    <property type="term" value="F:phosphomannomutase activity"/>
    <property type="evidence" value="ECO:0007669"/>
    <property type="project" value="TreeGrafter"/>
</dbReference>
<dbReference type="GO" id="GO:0005975">
    <property type="term" value="P:carbohydrate metabolic process"/>
    <property type="evidence" value="ECO:0007669"/>
    <property type="project" value="InterPro"/>
</dbReference>
<dbReference type="GO" id="GO:0009252">
    <property type="term" value="P:peptidoglycan biosynthetic process"/>
    <property type="evidence" value="ECO:0007669"/>
    <property type="project" value="TreeGrafter"/>
</dbReference>
<dbReference type="GO" id="GO:0006048">
    <property type="term" value="P:UDP-N-acetylglucosamine biosynthetic process"/>
    <property type="evidence" value="ECO:0007669"/>
    <property type="project" value="TreeGrafter"/>
</dbReference>
<dbReference type="CDD" id="cd05802">
    <property type="entry name" value="GlmM"/>
    <property type="match status" value="1"/>
</dbReference>
<dbReference type="FunFam" id="3.30.310.50:FF:000001">
    <property type="entry name" value="Phosphoglucosamine mutase"/>
    <property type="match status" value="1"/>
</dbReference>
<dbReference type="FunFam" id="3.40.120.10:FF:000001">
    <property type="entry name" value="Phosphoglucosamine mutase"/>
    <property type="match status" value="1"/>
</dbReference>
<dbReference type="FunFam" id="3.40.120.10:FF:000002">
    <property type="entry name" value="Phosphoglucosamine mutase"/>
    <property type="match status" value="1"/>
</dbReference>
<dbReference type="Gene3D" id="3.40.120.10">
    <property type="entry name" value="Alpha-D-Glucose-1,6-Bisphosphate, subunit A, domain 3"/>
    <property type="match status" value="3"/>
</dbReference>
<dbReference type="Gene3D" id="3.30.310.50">
    <property type="entry name" value="Alpha-D-phosphohexomutase, C-terminal domain"/>
    <property type="match status" value="1"/>
</dbReference>
<dbReference type="HAMAP" id="MF_01554_B">
    <property type="entry name" value="GlmM_B"/>
    <property type="match status" value="1"/>
</dbReference>
<dbReference type="InterPro" id="IPR005844">
    <property type="entry name" value="A-D-PHexomutase_a/b/a-I"/>
</dbReference>
<dbReference type="InterPro" id="IPR016055">
    <property type="entry name" value="A-D-PHexomutase_a/b/a-I/II/III"/>
</dbReference>
<dbReference type="InterPro" id="IPR005845">
    <property type="entry name" value="A-D-PHexomutase_a/b/a-II"/>
</dbReference>
<dbReference type="InterPro" id="IPR005846">
    <property type="entry name" value="A-D-PHexomutase_a/b/a-III"/>
</dbReference>
<dbReference type="InterPro" id="IPR005843">
    <property type="entry name" value="A-D-PHexomutase_C"/>
</dbReference>
<dbReference type="InterPro" id="IPR036900">
    <property type="entry name" value="A-D-PHexomutase_C_sf"/>
</dbReference>
<dbReference type="InterPro" id="IPR005841">
    <property type="entry name" value="Alpha-D-phosphohexomutase_SF"/>
</dbReference>
<dbReference type="InterPro" id="IPR006352">
    <property type="entry name" value="GlmM_bact"/>
</dbReference>
<dbReference type="InterPro" id="IPR050060">
    <property type="entry name" value="Phosphoglucosamine_mutase"/>
</dbReference>
<dbReference type="NCBIfam" id="TIGR01455">
    <property type="entry name" value="glmM"/>
    <property type="match status" value="1"/>
</dbReference>
<dbReference type="PANTHER" id="PTHR42946:SF1">
    <property type="entry name" value="PHOSPHOGLUCOMUTASE (ALPHA-D-GLUCOSE-1,6-BISPHOSPHATE-DEPENDENT)"/>
    <property type="match status" value="1"/>
</dbReference>
<dbReference type="PANTHER" id="PTHR42946">
    <property type="entry name" value="PHOSPHOHEXOSE MUTASE"/>
    <property type="match status" value="1"/>
</dbReference>
<dbReference type="Pfam" id="PF02878">
    <property type="entry name" value="PGM_PMM_I"/>
    <property type="match status" value="1"/>
</dbReference>
<dbReference type="Pfam" id="PF02879">
    <property type="entry name" value="PGM_PMM_II"/>
    <property type="match status" value="1"/>
</dbReference>
<dbReference type="Pfam" id="PF02880">
    <property type="entry name" value="PGM_PMM_III"/>
    <property type="match status" value="1"/>
</dbReference>
<dbReference type="Pfam" id="PF00408">
    <property type="entry name" value="PGM_PMM_IV"/>
    <property type="match status" value="1"/>
</dbReference>
<dbReference type="PRINTS" id="PR00509">
    <property type="entry name" value="PGMPMM"/>
</dbReference>
<dbReference type="SUPFAM" id="SSF55957">
    <property type="entry name" value="Phosphoglucomutase, C-terminal domain"/>
    <property type="match status" value="1"/>
</dbReference>
<dbReference type="SUPFAM" id="SSF53738">
    <property type="entry name" value="Phosphoglucomutase, first 3 domains"/>
    <property type="match status" value="3"/>
</dbReference>
<name>GLMM_BIFLS</name>
<protein>
    <recommendedName>
        <fullName evidence="1">Phosphoglucosamine mutase</fullName>
        <ecNumber evidence="1">5.4.2.10</ecNumber>
    </recommendedName>
</protein>
<reference key="1">
    <citation type="journal article" date="2008" name="Proc. Natl. Acad. Sci. U.S.A.">
        <title>The genome sequence of Bifidobacterium longum subsp. infantis reveals adaptations for milk utilization within the infant microbiome.</title>
        <authorList>
            <person name="Sela D.A."/>
            <person name="Chapman J."/>
            <person name="Adeuya A."/>
            <person name="Kim J.H."/>
            <person name="Chen F."/>
            <person name="Whitehead T.R."/>
            <person name="Lapidus A."/>
            <person name="Rokhsar D.S."/>
            <person name="Lebrilla C.B."/>
            <person name="German J.B."/>
            <person name="Price N.P."/>
            <person name="Richardson P.M."/>
            <person name="Mills D.A."/>
        </authorList>
    </citation>
    <scope>NUCLEOTIDE SEQUENCE [LARGE SCALE GENOMIC DNA]</scope>
    <source>
        <strain>ATCC 15697 / DSM 20088 / JCM 1222 / NCTC 11817 / S12</strain>
    </source>
</reference>
<reference key="2">
    <citation type="journal article" date="2011" name="Nature">
        <title>Bifidobacteria can protect from enteropathogenic infection through production of acetate.</title>
        <authorList>
            <person name="Fukuda S."/>
            <person name="Toh H."/>
            <person name="Hase K."/>
            <person name="Oshima K."/>
            <person name="Nakanishi Y."/>
            <person name="Yoshimura K."/>
            <person name="Tobe T."/>
            <person name="Clarke J.M."/>
            <person name="Topping D.L."/>
            <person name="Suzuki T."/>
            <person name="Taylor T.D."/>
            <person name="Itoh K."/>
            <person name="Kikuchi J."/>
            <person name="Morita H."/>
            <person name="Hattori M."/>
            <person name="Ohno H."/>
        </authorList>
    </citation>
    <scope>NUCLEOTIDE SEQUENCE [LARGE SCALE GENOMIC DNA]</scope>
    <source>
        <strain>ATCC 15697 / DSM 20088 / JCM 1222 / NCTC 11817 / S12</strain>
    </source>
</reference>
<keyword id="KW-0413">Isomerase</keyword>
<keyword id="KW-0460">Magnesium</keyword>
<keyword id="KW-0479">Metal-binding</keyword>
<keyword id="KW-0597">Phosphoprotein</keyword>
<comment type="function">
    <text evidence="1">Catalyzes the conversion of glucosamine-6-phosphate to glucosamine-1-phosphate.</text>
</comment>
<comment type="catalytic activity">
    <reaction evidence="1">
        <text>alpha-D-glucosamine 1-phosphate = D-glucosamine 6-phosphate</text>
        <dbReference type="Rhea" id="RHEA:23424"/>
        <dbReference type="ChEBI" id="CHEBI:58516"/>
        <dbReference type="ChEBI" id="CHEBI:58725"/>
        <dbReference type="EC" id="5.4.2.10"/>
    </reaction>
</comment>
<comment type="cofactor">
    <cofactor evidence="1">
        <name>Mg(2+)</name>
        <dbReference type="ChEBI" id="CHEBI:18420"/>
    </cofactor>
    <text evidence="1">Binds 1 Mg(2+) ion per subunit.</text>
</comment>
<comment type="PTM">
    <text evidence="1">Activated by phosphorylation.</text>
</comment>
<comment type="similarity">
    <text evidence="1">Belongs to the phosphohexose mutase family.</text>
</comment>
<sequence length="461" mass="48586">MPKMFGTDGVRGLANRDLTARLALDLGDAAVRVLGDAGTQDDQPEGRRRALVGRDTRVSGDFLASALSAGMSAGGFDVIDAGIIPTPGVAYLTSVLNVEIGAVISASHNPMPDNGIKFFARGGFKLPDQKEDDIEAVLGQDWDRPTGAGVGRVSHDQTTATNLYIDHLVATIAPLNDDKTQPKPLKGLKIVADCANGATSVVAPEALRRAGADVIVINASPDGYNINKNAGSTHPEQLQAMVKATDAVMGVAFDGDADRCLAVDEDGNMINGDQIMGILARAKQREGKLNHDTLVVTVMSNLGLKLALKDMGIKTVETAVGDRYVLEEMLKGGYSLGGEQSGHVINREFATTGDGTLTALTLCNEVVKSGKSLKELAADFPQLPQTLINVPNVDKKAAATNKRIQDAVAREEELLGDTGRVLLRPSGTEPLVRVMAEAATQAYADEVCTRLAKIVAEELAL</sequence>
<accession>B7GUF2</accession>
<accession>E8MMA9</accession>
<proteinExistence type="inferred from homology"/>
<evidence type="ECO:0000255" key="1">
    <source>
        <dbReference type="HAMAP-Rule" id="MF_01554"/>
    </source>
</evidence>
<organism>
    <name type="scientific">Bifidobacterium longum subsp. infantis (strain ATCC 15697 / DSM 20088 / JCM 1222 / NCTC 11817 / S12)</name>
    <dbReference type="NCBI Taxonomy" id="391904"/>
    <lineage>
        <taxon>Bacteria</taxon>
        <taxon>Bacillati</taxon>
        <taxon>Actinomycetota</taxon>
        <taxon>Actinomycetes</taxon>
        <taxon>Bifidobacteriales</taxon>
        <taxon>Bifidobacteriaceae</taxon>
        <taxon>Bifidobacterium</taxon>
    </lineage>
</organism>